<organism>
    <name type="scientific">Mytilus galloprovincialis</name>
    <name type="common">Mediterranean mussel</name>
    <dbReference type="NCBI Taxonomy" id="29158"/>
    <lineage>
        <taxon>Eukaryota</taxon>
        <taxon>Metazoa</taxon>
        <taxon>Spiralia</taxon>
        <taxon>Lophotrochozoa</taxon>
        <taxon>Mollusca</taxon>
        <taxon>Bivalvia</taxon>
        <taxon>Autobranchia</taxon>
        <taxon>Pteriomorphia</taxon>
        <taxon>Mytilida</taxon>
        <taxon>Mytiloidea</taxon>
        <taxon>Mytilidae</taxon>
        <taxon>Mytilinae</taxon>
        <taxon>Mytilus</taxon>
    </lineage>
</organism>
<name>MYSP_MYTGA</name>
<reference key="1">
    <citation type="journal article" date="2000" name="J. Exp. Zool.">
        <title>Complete amino acid sequence of Mytilus anterior byssus retractor paramyosin and its putative phosphorylation site.</title>
        <authorList>
            <person name="Watabe S."/>
            <person name="Iwasaki K."/>
            <person name="Funabara D."/>
            <person name="Hirayama Y."/>
            <person name="Nakaya M."/>
            <person name="Kikuchi K."/>
        </authorList>
    </citation>
    <scope>NUCLEOTIDE SEQUENCE [MRNA]</scope>
    <source>
        <tissue>Anterior byssus retractor muscle</tissue>
    </source>
</reference>
<evidence type="ECO:0000250" key="1"/>
<evidence type="ECO:0000255" key="2"/>
<evidence type="ECO:0000305" key="3"/>
<feature type="chain" id="PRO_0000211252" description="Paramyosin">
    <location>
        <begin position="1"/>
        <end position="864"/>
    </location>
</feature>
<feature type="region of interest" description="Nonhelical region" evidence="2">
    <location>
        <begin position="1"/>
        <end position="30"/>
    </location>
</feature>
<feature type="region of interest" description="Nonhelical region" evidence="2">
    <location>
        <begin position="854"/>
        <end position="864"/>
    </location>
</feature>
<feature type="coiled-coil region" evidence="2">
    <location>
        <begin position="31"/>
        <end position="853"/>
    </location>
</feature>
<protein>
    <recommendedName>
        <fullName>Paramyosin</fullName>
    </recommendedName>
</protein>
<accession>O96064</accession>
<sequence>MSSLYRDLDSDVSSTRIVRHSYNVYRGSSPSSQNRLESRIRELEDSLDSEREMRLRYEKQSAELTFQLDQMADRLEDAMGTSTTVSEVSRKREAEVNKVRKDLELSCAQFEATEQNMRRRHQEALNDLTDQLEHMGKSKSRAEKEKNQLIIEIDSLQAMNDGLQKSKMSADSKIDALEGSNSRLKAAVDDLTRQLNDSNLSKARLTQENFDLQHQVQELDGANAGLAKAKAQLQILCDDLKRNLDDESRQRQNLQVQLAAIQSDYDNLNARYEEESENASSLRAQLSSLSATYAALKTKYDKELMAKQEELEEIRRRLSIKIQELEDTCEQLRTRCNTLEKTKNKLTVEIREITIELENTQIIVQDLTKRNRQLENENAALQKRCDDLSAENGQLRNEKANLEAECARLKVANAELAEKNANLERENAGLQNALREANNELKAANRTINELTALKAQLEAERDNLASALRDTEEALRDAEAKLAAAQAALNQLRSEMEQRLREKDEEIDSIRKSSARAIDELQRTLVEVETRYKTEISRIKKKYETDIRELEGALDNANRANAEYLKQIKSLQNRNRELELQLEEATRQLDDTRNQLSVSERKRITIQQELEDARSLLEHAERARKNAENELGEVTVRLTEVQLQVTALTNDKRRMEADIAAMQSDLDDALNGQRAAEERADRLQAEVNRLADELRQEQDNYKNAESLRKQLEIEIREITVRLEEAEAFAQREGKRQIAKLQARIRDLENELEADQRRLREAAASARKFERQWKETVQASDEDRRQVAELTSITDQLTMKCKTYKRMIEEAEDVASITMNKYRKAQSLIDEAEQRADMAEKNLQTVRRSRSMSVSREVTRVVRV</sequence>
<dbReference type="EMBL" id="AB016070">
    <property type="protein sequence ID" value="BAA36517.1"/>
    <property type="molecule type" value="mRNA"/>
</dbReference>
<dbReference type="SMR" id="O96064"/>
<dbReference type="Allergome" id="8827">
    <property type="allergen name" value="Myt g PM"/>
</dbReference>
<dbReference type="OrthoDB" id="2018427at2759"/>
<dbReference type="PhylomeDB" id="O96064"/>
<dbReference type="GO" id="GO:0030016">
    <property type="term" value="C:myofibril"/>
    <property type="evidence" value="ECO:0007669"/>
    <property type="project" value="UniProtKB-SubCell"/>
</dbReference>
<dbReference type="GO" id="GO:0016459">
    <property type="term" value="C:myosin complex"/>
    <property type="evidence" value="ECO:0007669"/>
    <property type="project" value="UniProtKB-KW"/>
</dbReference>
<dbReference type="GO" id="GO:0032982">
    <property type="term" value="C:myosin filament"/>
    <property type="evidence" value="ECO:0007669"/>
    <property type="project" value="UniProtKB-KW"/>
</dbReference>
<dbReference type="Gene3D" id="1.20.5.340">
    <property type="match status" value="4"/>
</dbReference>
<dbReference type="Gene3D" id="1.20.5.370">
    <property type="match status" value="2"/>
</dbReference>
<dbReference type="InterPro" id="IPR002928">
    <property type="entry name" value="Myosin_tail"/>
</dbReference>
<dbReference type="InterPro" id="IPR014751">
    <property type="entry name" value="XRCC4-like_C"/>
</dbReference>
<dbReference type="PANTHER" id="PTHR46349">
    <property type="entry name" value="CINGULIN-LIKE PROTEIN 1-RELATED"/>
    <property type="match status" value="1"/>
</dbReference>
<dbReference type="PANTHER" id="PTHR46349:SF6">
    <property type="entry name" value="MYOSIN-6-LIKE"/>
    <property type="match status" value="1"/>
</dbReference>
<dbReference type="Pfam" id="PF01576">
    <property type="entry name" value="Myosin_tail_1"/>
    <property type="match status" value="1"/>
</dbReference>
<dbReference type="SUPFAM" id="SSF90257">
    <property type="entry name" value="Myosin rod fragments"/>
    <property type="match status" value="3"/>
</dbReference>
<dbReference type="SUPFAM" id="SSF57997">
    <property type="entry name" value="Tropomyosin"/>
    <property type="match status" value="1"/>
</dbReference>
<keyword id="KW-0175">Coiled coil</keyword>
<keyword id="KW-0963">Cytoplasm</keyword>
<keyword id="KW-0505">Motor protein</keyword>
<keyword id="KW-0514">Muscle protein</keyword>
<keyword id="KW-0518">Myosin</keyword>
<keyword id="KW-0597">Phosphoprotein</keyword>
<keyword id="KW-0787">Thick filament</keyword>
<comment type="function">
    <text>Paramyosin is a major structural component of many thick filaments isolated from invertebrate muscles.</text>
</comment>
<comment type="subunit">
    <text evidence="1">Homodimer.</text>
</comment>
<comment type="subcellular location">
    <subcellularLocation>
        <location>Cytoplasm</location>
        <location>Myofibril</location>
    </subcellularLocation>
    <text>Thick filaments of the myofibrils.</text>
</comment>
<comment type="tissue specificity">
    <text>Most abundantly expressed in muscle tissues from byssus retractor and adductor muscles. Low expression in foot, gill, inner mantle and outer mantle.</text>
</comment>
<comment type="PTM">
    <text evidence="1">Phosphorylated.</text>
</comment>
<comment type="similarity">
    <text evidence="3">Belongs to the paramyosin family.</text>
</comment>
<proteinExistence type="evidence at transcript level"/>